<evidence type="ECO:0000255" key="1">
    <source>
        <dbReference type="HAMAP-Rule" id="MF_00244"/>
    </source>
</evidence>
<gene>
    <name evidence="1" type="primary">nadD</name>
    <name type="ordered locus">Acel_0762</name>
</gene>
<keyword id="KW-0067">ATP-binding</keyword>
<keyword id="KW-0520">NAD</keyword>
<keyword id="KW-0547">Nucleotide-binding</keyword>
<keyword id="KW-0548">Nucleotidyltransferase</keyword>
<keyword id="KW-0662">Pyridine nucleotide biosynthesis</keyword>
<keyword id="KW-1185">Reference proteome</keyword>
<keyword id="KW-0808">Transferase</keyword>
<reference key="1">
    <citation type="journal article" date="2009" name="Genome Res.">
        <title>Complete genome of the cellulolytic thermophile Acidothermus cellulolyticus 11B provides insights into its ecophysiological and evolutionary adaptations.</title>
        <authorList>
            <person name="Barabote R.D."/>
            <person name="Xie G."/>
            <person name="Leu D.H."/>
            <person name="Normand P."/>
            <person name="Necsulea A."/>
            <person name="Daubin V."/>
            <person name="Medigue C."/>
            <person name="Adney W.S."/>
            <person name="Xu X.C."/>
            <person name="Lapidus A."/>
            <person name="Parales R.E."/>
            <person name="Detter C."/>
            <person name="Pujic P."/>
            <person name="Bruce D."/>
            <person name="Lavire C."/>
            <person name="Challacombe J.F."/>
            <person name="Brettin T.S."/>
            <person name="Berry A.M."/>
        </authorList>
    </citation>
    <scope>NUCLEOTIDE SEQUENCE [LARGE SCALE GENOMIC DNA]</scope>
    <source>
        <strain>ATCC 43068 / DSM 8971 / 11B</strain>
    </source>
</reference>
<feature type="chain" id="PRO_0000336675" description="Probable nicotinate-nucleotide adenylyltransferase">
    <location>
        <begin position="1"/>
        <end position="208"/>
    </location>
</feature>
<comment type="function">
    <text evidence="1">Catalyzes the reversible adenylation of nicotinate mononucleotide (NaMN) to nicotinic acid adenine dinucleotide (NaAD).</text>
</comment>
<comment type="catalytic activity">
    <reaction evidence="1">
        <text>nicotinate beta-D-ribonucleotide + ATP + H(+) = deamido-NAD(+) + diphosphate</text>
        <dbReference type="Rhea" id="RHEA:22860"/>
        <dbReference type="ChEBI" id="CHEBI:15378"/>
        <dbReference type="ChEBI" id="CHEBI:30616"/>
        <dbReference type="ChEBI" id="CHEBI:33019"/>
        <dbReference type="ChEBI" id="CHEBI:57502"/>
        <dbReference type="ChEBI" id="CHEBI:58437"/>
        <dbReference type="EC" id="2.7.7.18"/>
    </reaction>
</comment>
<comment type="pathway">
    <text evidence="1">Cofactor biosynthesis; NAD(+) biosynthesis; deamido-NAD(+) from nicotinate D-ribonucleotide: step 1/1.</text>
</comment>
<comment type="similarity">
    <text evidence="1">Belongs to the NadD family.</text>
</comment>
<dbReference type="EC" id="2.7.7.18" evidence="1"/>
<dbReference type="EMBL" id="CP000481">
    <property type="protein sequence ID" value="ABK52535.1"/>
    <property type="molecule type" value="Genomic_DNA"/>
</dbReference>
<dbReference type="RefSeq" id="WP_011719598.1">
    <property type="nucleotide sequence ID" value="NC_008578.1"/>
</dbReference>
<dbReference type="SMR" id="A0LSX5"/>
<dbReference type="FunCoup" id="A0LSX5">
    <property type="interactions" value="131"/>
</dbReference>
<dbReference type="STRING" id="351607.Acel_0762"/>
<dbReference type="KEGG" id="ace:Acel_0762"/>
<dbReference type="eggNOG" id="COG1057">
    <property type="taxonomic scope" value="Bacteria"/>
</dbReference>
<dbReference type="HOGENOM" id="CLU_069765_1_1_11"/>
<dbReference type="InParanoid" id="A0LSX5"/>
<dbReference type="UniPathway" id="UPA00253">
    <property type="reaction ID" value="UER00332"/>
</dbReference>
<dbReference type="Proteomes" id="UP000008221">
    <property type="component" value="Chromosome"/>
</dbReference>
<dbReference type="GO" id="GO:0005524">
    <property type="term" value="F:ATP binding"/>
    <property type="evidence" value="ECO:0007669"/>
    <property type="project" value="UniProtKB-KW"/>
</dbReference>
<dbReference type="GO" id="GO:0004515">
    <property type="term" value="F:nicotinate-nucleotide adenylyltransferase activity"/>
    <property type="evidence" value="ECO:0007669"/>
    <property type="project" value="UniProtKB-UniRule"/>
</dbReference>
<dbReference type="GO" id="GO:0009435">
    <property type="term" value="P:NAD biosynthetic process"/>
    <property type="evidence" value="ECO:0007669"/>
    <property type="project" value="UniProtKB-UniRule"/>
</dbReference>
<dbReference type="CDD" id="cd02165">
    <property type="entry name" value="NMNAT"/>
    <property type="match status" value="1"/>
</dbReference>
<dbReference type="FunFam" id="3.40.50.620:FF:000039">
    <property type="entry name" value="Probable nicotinate-nucleotide adenylyltransferase"/>
    <property type="match status" value="1"/>
</dbReference>
<dbReference type="Gene3D" id="3.40.50.620">
    <property type="entry name" value="HUPs"/>
    <property type="match status" value="1"/>
</dbReference>
<dbReference type="HAMAP" id="MF_00244">
    <property type="entry name" value="NaMN_adenylyltr"/>
    <property type="match status" value="1"/>
</dbReference>
<dbReference type="InterPro" id="IPR004821">
    <property type="entry name" value="Cyt_trans-like"/>
</dbReference>
<dbReference type="InterPro" id="IPR005248">
    <property type="entry name" value="NadD/NMNAT"/>
</dbReference>
<dbReference type="InterPro" id="IPR014729">
    <property type="entry name" value="Rossmann-like_a/b/a_fold"/>
</dbReference>
<dbReference type="NCBIfam" id="TIGR00125">
    <property type="entry name" value="cyt_tran_rel"/>
    <property type="match status" value="1"/>
</dbReference>
<dbReference type="NCBIfam" id="TIGR00482">
    <property type="entry name" value="nicotinate (nicotinamide) nucleotide adenylyltransferase"/>
    <property type="match status" value="1"/>
</dbReference>
<dbReference type="NCBIfam" id="NF000840">
    <property type="entry name" value="PRK00071.1-3"/>
    <property type="match status" value="1"/>
</dbReference>
<dbReference type="PANTHER" id="PTHR39321">
    <property type="entry name" value="NICOTINATE-NUCLEOTIDE ADENYLYLTRANSFERASE-RELATED"/>
    <property type="match status" value="1"/>
</dbReference>
<dbReference type="PANTHER" id="PTHR39321:SF3">
    <property type="entry name" value="PHOSPHOPANTETHEINE ADENYLYLTRANSFERASE"/>
    <property type="match status" value="1"/>
</dbReference>
<dbReference type="Pfam" id="PF01467">
    <property type="entry name" value="CTP_transf_like"/>
    <property type="match status" value="1"/>
</dbReference>
<dbReference type="SUPFAM" id="SSF52374">
    <property type="entry name" value="Nucleotidylyl transferase"/>
    <property type="match status" value="1"/>
</dbReference>
<accession>A0LSX5</accession>
<sequence>MTGRRARIGVMGGTFDPIHHGHLVAASEVASQFQLEEVIFVPTGQPWQKAERDIAPAEDRYLMTVIATASNPRFTVSRVDIDRPGPTYTIDTLRDLRAELAARGLTDPDLFFITGADALAKIMSWNRAEELLTMAHFVGVTRPGHRLDTPTGLPPDRVSLLEIPALAISSTECRERIRQNRPIWYLVPDGIVQYISKRGLYRRTDGGR</sequence>
<organism>
    <name type="scientific">Acidothermus cellulolyticus (strain ATCC 43068 / DSM 8971 / 11B)</name>
    <dbReference type="NCBI Taxonomy" id="351607"/>
    <lineage>
        <taxon>Bacteria</taxon>
        <taxon>Bacillati</taxon>
        <taxon>Actinomycetota</taxon>
        <taxon>Actinomycetes</taxon>
        <taxon>Acidothermales</taxon>
        <taxon>Acidothermaceae</taxon>
        <taxon>Acidothermus</taxon>
    </lineage>
</organism>
<protein>
    <recommendedName>
        <fullName evidence="1">Probable nicotinate-nucleotide adenylyltransferase</fullName>
        <ecNumber evidence="1">2.7.7.18</ecNumber>
    </recommendedName>
    <alternativeName>
        <fullName evidence="1">Deamido-NAD(+) diphosphorylase</fullName>
    </alternativeName>
    <alternativeName>
        <fullName evidence="1">Deamido-NAD(+) pyrophosphorylase</fullName>
    </alternativeName>
    <alternativeName>
        <fullName evidence="1">Nicotinate mononucleotide adenylyltransferase</fullName>
        <shortName evidence="1">NaMN adenylyltransferase</shortName>
    </alternativeName>
</protein>
<name>NADD_ACIC1</name>
<proteinExistence type="inferred from homology"/>